<gene>
    <name evidence="1" type="primary">aroE</name>
    <name type="ordered locus">RPB_1302</name>
</gene>
<proteinExistence type="inferred from homology"/>
<comment type="function">
    <text evidence="1">Involved in the biosynthesis of the chorismate, which leads to the biosynthesis of aromatic amino acids. Catalyzes the reversible NADPH linked reduction of 3-dehydroshikimate (DHSA) to yield shikimate (SA).</text>
</comment>
<comment type="catalytic activity">
    <reaction evidence="1">
        <text>shikimate + NADP(+) = 3-dehydroshikimate + NADPH + H(+)</text>
        <dbReference type="Rhea" id="RHEA:17737"/>
        <dbReference type="ChEBI" id="CHEBI:15378"/>
        <dbReference type="ChEBI" id="CHEBI:16630"/>
        <dbReference type="ChEBI" id="CHEBI:36208"/>
        <dbReference type="ChEBI" id="CHEBI:57783"/>
        <dbReference type="ChEBI" id="CHEBI:58349"/>
        <dbReference type="EC" id="1.1.1.25"/>
    </reaction>
</comment>
<comment type="pathway">
    <text evidence="1">Metabolic intermediate biosynthesis; chorismate biosynthesis; chorismate from D-erythrose 4-phosphate and phosphoenolpyruvate: step 4/7.</text>
</comment>
<comment type="subunit">
    <text evidence="1">Homodimer.</text>
</comment>
<comment type="similarity">
    <text evidence="1">Belongs to the shikimate dehydrogenase family.</text>
</comment>
<reference key="1">
    <citation type="submission" date="2006-01" db="EMBL/GenBank/DDBJ databases">
        <title>Complete sequence of Rhodopseudomonas palustris HaA2.</title>
        <authorList>
            <consortium name="US DOE Joint Genome Institute"/>
            <person name="Copeland A."/>
            <person name="Lucas S."/>
            <person name="Lapidus A."/>
            <person name="Barry K."/>
            <person name="Detter J.C."/>
            <person name="Glavina T."/>
            <person name="Hammon N."/>
            <person name="Israni S."/>
            <person name="Pitluck S."/>
            <person name="Chain P."/>
            <person name="Malfatti S."/>
            <person name="Shin M."/>
            <person name="Vergez L."/>
            <person name="Schmutz J."/>
            <person name="Larimer F."/>
            <person name="Land M."/>
            <person name="Hauser L."/>
            <person name="Pelletier D.A."/>
            <person name="Kyrpides N."/>
            <person name="Anderson I."/>
            <person name="Oda Y."/>
            <person name="Harwood C.S."/>
            <person name="Richardson P."/>
        </authorList>
    </citation>
    <scope>NUCLEOTIDE SEQUENCE [LARGE SCALE GENOMIC DNA]</scope>
    <source>
        <strain>HaA2</strain>
    </source>
</reference>
<protein>
    <recommendedName>
        <fullName evidence="1">Shikimate dehydrogenase (NADP(+))</fullName>
        <shortName evidence="1">SDH</shortName>
        <ecNumber evidence="1">1.1.1.25</ecNumber>
    </recommendedName>
</protein>
<evidence type="ECO:0000255" key="1">
    <source>
        <dbReference type="HAMAP-Rule" id="MF_00222"/>
    </source>
</evidence>
<accession>Q2J0J8</accession>
<sequence>MHPGDGHTAACLIGWPAAHSRSPLIHHYWLRTLGIPGGYSIESVPPEGFAEFVLNLRAHGYSGANVTIPHKERALQLTQPDDRARAVGAANTLYYDGDVLRSTNTDVEGFIANLDASAPGWDRTPHAVVLGAGGSARAVLFGLLERGIERIALANRSLERAQALADLFGERVVPIAWTDAPAALPGAGLLVNTTSLGMKGQPSLDLDLEPLPSDATVADLVYVPLETELLAEARGRGLRTADGLGMLLHQAVRGFELWFGARPHVTAELRALVEADLAAK</sequence>
<name>AROE_RHOP2</name>
<keyword id="KW-0028">Amino-acid biosynthesis</keyword>
<keyword id="KW-0057">Aromatic amino acid biosynthesis</keyword>
<keyword id="KW-0521">NADP</keyword>
<keyword id="KW-0560">Oxidoreductase</keyword>
<keyword id="KW-1185">Reference proteome</keyword>
<dbReference type="EC" id="1.1.1.25" evidence="1"/>
<dbReference type="EMBL" id="CP000250">
    <property type="protein sequence ID" value="ABD06012.1"/>
    <property type="molecule type" value="Genomic_DNA"/>
</dbReference>
<dbReference type="RefSeq" id="WP_011440200.1">
    <property type="nucleotide sequence ID" value="NC_007778.1"/>
</dbReference>
<dbReference type="SMR" id="Q2J0J8"/>
<dbReference type="STRING" id="316058.RPB_1302"/>
<dbReference type="KEGG" id="rpb:RPB_1302"/>
<dbReference type="eggNOG" id="COG0169">
    <property type="taxonomic scope" value="Bacteria"/>
</dbReference>
<dbReference type="HOGENOM" id="CLU_044063_2_0_5"/>
<dbReference type="OrthoDB" id="9792692at2"/>
<dbReference type="UniPathway" id="UPA00053">
    <property type="reaction ID" value="UER00087"/>
</dbReference>
<dbReference type="Proteomes" id="UP000008809">
    <property type="component" value="Chromosome"/>
</dbReference>
<dbReference type="GO" id="GO:0005829">
    <property type="term" value="C:cytosol"/>
    <property type="evidence" value="ECO:0007669"/>
    <property type="project" value="TreeGrafter"/>
</dbReference>
<dbReference type="GO" id="GO:0050661">
    <property type="term" value="F:NADP binding"/>
    <property type="evidence" value="ECO:0007669"/>
    <property type="project" value="InterPro"/>
</dbReference>
<dbReference type="GO" id="GO:0004764">
    <property type="term" value="F:shikimate 3-dehydrogenase (NADP+) activity"/>
    <property type="evidence" value="ECO:0007669"/>
    <property type="project" value="UniProtKB-UniRule"/>
</dbReference>
<dbReference type="GO" id="GO:0008652">
    <property type="term" value="P:amino acid biosynthetic process"/>
    <property type="evidence" value="ECO:0007669"/>
    <property type="project" value="UniProtKB-KW"/>
</dbReference>
<dbReference type="GO" id="GO:0009073">
    <property type="term" value="P:aromatic amino acid family biosynthetic process"/>
    <property type="evidence" value="ECO:0007669"/>
    <property type="project" value="UniProtKB-KW"/>
</dbReference>
<dbReference type="GO" id="GO:0009423">
    <property type="term" value="P:chorismate biosynthetic process"/>
    <property type="evidence" value="ECO:0007669"/>
    <property type="project" value="UniProtKB-UniRule"/>
</dbReference>
<dbReference type="GO" id="GO:0019632">
    <property type="term" value="P:shikimate metabolic process"/>
    <property type="evidence" value="ECO:0007669"/>
    <property type="project" value="InterPro"/>
</dbReference>
<dbReference type="CDD" id="cd01065">
    <property type="entry name" value="NAD_bind_Shikimate_DH"/>
    <property type="match status" value="1"/>
</dbReference>
<dbReference type="Gene3D" id="3.40.50.10860">
    <property type="entry name" value="Leucine Dehydrogenase, chain A, domain 1"/>
    <property type="match status" value="1"/>
</dbReference>
<dbReference type="Gene3D" id="3.40.50.720">
    <property type="entry name" value="NAD(P)-binding Rossmann-like Domain"/>
    <property type="match status" value="1"/>
</dbReference>
<dbReference type="HAMAP" id="MF_00222">
    <property type="entry name" value="Shikimate_DH_AroE"/>
    <property type="match status" value="1"/>
</dbReference>
<dbReference type="InterPro" id="IPR046346">
    <property type="entry name" value="Aminoacid_DH-like_N_sf"/>
</dbReference>
<dbReference type="InterPro" id="IPR036291">
    <property type="entry name" value="NAD(P)-bd_dom_sf"/>
</dbReference>
<dbReference type="InterPro" id="IPR041121">
    <property type="entry name" value="SDH_C"/>
</dbReference>
<dbReference type="InterPro" id="IPR011342">
    <property type="entry name" value="Shikimate_DH"/>
</dbReference>
<dbReference type="InterPro" id="IPR013708">
    <property type="entry name" value="Shikimate_DH-bd_N"/>
</dbReference>
<dbReference type="InterPro" id="IPR022893">
    <property type="entry name" value="Shikimate_DH_fam"/>
</dbReference>
<dbReference type="InterPro" id="IPR006151">
    <property type="entry name" value="Shikm_DH/Glu-tRNA_Rdtase"/>
</dbReference>
<dbReference type="NCBIfam" id="TIGR00507">
    <property type="entry name" value="aroE"/>
    <property type="match status" value="1"/>
</dbReference>
<dbReference type="NCBIfam" id="NF001312">
    <property type="entry name" value="PRK00258.1-4"/>
    <property type="match status" value="1"/>
</dbReference>
<dbReference type="PANTHER" id="PTHR21089:SF1">
    <property type="entry name" value="BIFUNCTIONAL 3-DEHYDROQUINATE DEHYDRATASE_SHIKIMATE DEHYDROGENASE, CHLOROPLASTIC"/>
    <property type="match status" value="1"/>
</dbReference>
<dbReference type="PANTHER" id="PTHR21089">
    <property type="entry name" value="SHIKIMATE DEHYDROGENASE"/>
    <property type="match status" value="1"/>
</dbReference>
<dbReference type="Pfam" id="PF18317">
    <property type="entry name" value="SDH_C"/>
    <property type="match status" value="1"/>
</dbReference>
<dbReference type="Pfam" id="PF01488">
    <property type="entry name" value="Shikimate_DH"/>
    <property type="match status" value="1"/>
</dbReference>
<dbReference type="Pfam" id="PF08501">
    <property type="entry name" value="Shikimate_dh_N"/>
    <property type="match status" value="1"/>
</dbReference>
<dbReference type="SUPFAM" id="SSF53223">
    <property type="entry name" value="Aminoacid dehydrogenase-like, N-terminal domain"/>
    <property type="match status" value="1"/>
</dbReference>
<dbReference type="SUPFAM" id="SSF51735">
    <property type="entry name" value="NAD(P)-binding Rossmann-fold domains"/>
    <property type="match status" value="1"/>
</dbReference>
<organism>
    <name type="scientific">Rhodopseudomonas palustris (strain HaA2)</name>
    <dbReference type="NCBI Taxonomy" id="316058"/>
    <lineage>
        <taxon>Bacteria</taxon>
        <taxon>Pseudomonadati</taxon>
        <taxon>Pseudomonadota</taxon>
        <taxon>Alphaproteobacteria</taxon>
        <taxon>Hyphomicrobiales</taxon>
        <taxon>Nitrobacteraceae</taxon>
        <taxon>Rhodopseudomonas</taxon>
    </lineage>
</organism>
<feature type="chain" id="PRO_1000021321" description="Shikimate dehydrogenase (NADP(+))">
    <location>
        <begin position="1"/>
        <end position="280"/>
    </location>
</feature>
<feature type="active site" description="Proton acceptor" evidence="1">
    <location>
        <position position="71"/>
    </location>
</feature>
<feature type="binding site" evidence="1">
    <location>
        <begin position="20"/>
        <end position="22"/>
    </location>
    <ligand>
        <name>shikimate</name>
        <dbReference type="ChEBI" id="CHEBI:36208"/>
    </ligand>
</feature>
<feature type="binding site" evidence="1">
    <location>
        <position position="67"/>
    </location>
    <ligand>
        <name>shikimate</name>
        <dbReference type="ChEBI" id="CHEBI:36208"/>
    </ligand>
</feature>
<feature type="binding site" evidence="1">
    <location>
        <position position="82"/>
    </location>
    <ligand>
        <name>NADP(+)</name>
        <dbReference type="ChEBI" id="CHEBI:58349"/>
    </ligand>
</feature>
<feature type="binding site" evidence="1">
    <location>
        <position position="91"/>
    </location>
    <ligand>
        <name>shikimate</name>
        <dbReference type="ChEBI" id="CHEBI:36208"/>
    </ligand>
</feature>
<feature type="binding site" evidence="1">
    <location>
        <position position="106"/>
    </location>
    <ligand>
        <name>shikimate</name>
        <dbReference type="ChEBI" id="CHEBI:36208"/>
    </ligand>
</feature>
<feature type="binding site" evidence="1">
    <location>
        <begin position="131"/>
        <end position="135"/>
    </location>
    <ligand>
        <name>NADP(+)</name>
        <dbReference type="ChEBI" id="CHEBI:58349"/>
    </ligand>
</feature>
<feature type="binding site" evidence="1">
    <location>
        <position position="220"/>
    </location>
    <ligand>
        <name>NADP(+)</name>
        <dbReference type="ChEBI" id="CHEBI:58349"/>
    </ligand>
</feature>
<feature type="binding site" evidence="1">
    <location>
        <position position="222"/>
    </location>
    <ligand>
        <name>shikimate</name>
        <dbReference type="ChEBI" id="CHEBI:36208"/>
    </ligand>
</feature>
<feature type="binding site" evidence="1">
    <location>
        <position position="243"/>
    </location>
    <ligand>
        <name>NADP(+)</name>
        <dbReference type="ChEBI" id="CHEBI:58349"/>
    </ligand>
</feature>